<feature type="chain" id="PRO_0000270921" description="tRNA (guanosine(18)-2'-O)-methyltransferase">
    <location>
        <begin position="1"/>
        <end position="1436"/>
    </location>
</feature>
<feature type="binding site" evidence="1">
    <location>
        <begin position="1365"/>
        <end position="1367"/>
    </location>
    <ligand>
        <name>S-adenosyl-L-methionine</name>
        <dbReference type="ChEBI" id="CHEBI:59789"/>
    </ligand>
</feature>
<feature type="binding site" evidence="1">
    <location>
        <position position="1389"/>
    </location>
    <ligand>
        <name>S-adenosyl-L-methionine</name>
        <dbReference type="ChEBI" id="CHEBI:59789"/>
    </ligand>
</feature>
<feature type="binding site" evidence="1">
    <location>
        <begin position="1409"/>
        <end position="1418"/>
    </location>
    <ligand>
        <name>S-adenosyl-L-methionine</name>
        <dbReference type="ChEBI" id="CHEBI:59789"/>
    </ligand>
</feature>
<reference key="1">
    <citation type="journal article" date="1997" name="Nature">
        <title>The nucleotide sequence of Saccharomyces cerevisiae chromosome IV.</title>
        <authorList>
            <person name="Jacq C."/>
            <person name="Alt-Moerbe J."/>
            <person name="Andre B."/>
            <person name="Arnold W."/>
            <person name="Bahr A."/>
            <person name="Ballesta J.P.G."/>
            <person name="Bargues M."/>
            <person name="Baron L."/>
            <person name="Becker A."/>
            <person name="Biteau N."/>
            <person name="Bloecker H."/>
            <person name="Blugeon C."/>
            <person name="Boskovic J."/>
            <person name="Brandt P."/>
            <person name="Brueckner M."/>
            <person name="Buitrago M.J."/>
            <person name="Coster F."/>
            <person name="Delaveau T."/>
            <person name="del Rey F."/>
            <person name="Dujon B."/>
            <person name="Eide L.G."/>
            <person name="Garcia-Cantalejo J.M."/>
            <person name="Goffeau A."/>
            <person name="Gomez-Peris A."/>
            <person name="Granotier C."/>
            <person name="Hanemann V."/>
            <person name="Hankeln T."/>
            <person name="Hoheisel J.D."/>
            <person name="Jaeger W."/>
            <person name="Jimenez A."/>
            <person name="Jonniaux J.-L."/>
            <person name="Kraemer C."/>
            <person name="Kuester H."/>
            <person name="Laamanen P."/>
            <person name="Legros Y."/>
            <person name="Louis E.J."/>
            <person name="Moeller-Rieker S."/>
            <person name="Monnet A."/>
            <person name="Moro M."/>
            <person name="Mueller-Auer S."/>
            <person name="Nussbaumer B."/>
            <person name="Paricio N."/>
            <person name="Paulin L."/>
            <person name="Perea J."/>
            <person name="Perez-Alonso M."/>
            <person name="Perez-Ortin J.E."/>
            <person name="Pohl T.M."/>
            <person name="Prydz H."/>
            <person name="Purnelle B."/>
            <person name="Rasmussen S.W."/>
            <person name="Remacha M.A."/>
            <person name="Revuelta J.L."/>
            <person name="Rieger M."/>
            <person name="Salom D."/>
            <person name="Saluz H.P."/>
            <person name="Saiz J.E."/>
            <person name="Saren A.-M."/>
            <person name="Schaefer M."/>
            <person name="Scharfe M."/>
            <person name="Schmidt E.R."/>
            <person name="Schneider C."/>
            <person name="Scholler P."/>
            <person name="Schwarz S."/>
            <person name="Soler-Mira A."/>
            <person name="Urrestarazu L.A."/>
            <person name="Verhasselt P."/>
            <person name="Vissers S."/>
            <person name="Voet M."/>
            <person name="Volckaert G."/>
            <person name="Wagner G."/>
            <person name="Wambutt R."/>
            <person name="Wedler E."/>
            <person name="Wedler H."/>
            <person name="Woelfl S."/>
            <person name="Harris D.E."/>
            <person name="Bowman S."/>
            <person name="Brown D."/>
            <person name="Churcher C.M."/>
            <person name="Connor R."/>
            <person name="Dedman K."/>
            <person name="Gentles S."/>
            <person name="Hamlin N."/>
            <person name="Hunt S."/>
            <person name="Jones L."/>
            <person name="McDonald S."/>
            <person name="Murphy L.D."/>
            <person name="Niblett D."/>
            <person name="Odell C."/>
            <person name="Oliver K."/>
            <person name="Rajandream M.A."/>
            <person name="Richards C."/>
            <person name="Shore L."/>
            <person name="Walsh S.V."/>
            <person name="Barrell B.G."/>
            <person name="Dietrich F.S."/>
            <person name="Mulligan J.T."/>
            <person name="Allen E."/>
            <person name="Araujo R."/>
            <person name="Aviles E."/>
            <person name="Berno A."/>
            <person name="Carpenter J."/>
            <person name="Chen E."/>
            <person name="Cherry J.M."/>
            <person name="Chung E."/>
            <person name="Duncan M."/>
            <person name="Hunicke-Smith S."/>
            <person name="Hyman R.W."/>
            <person name="Komp C."/>
            <person name="Lashkari D."/>
            <person name="Lew H."/>
            <person name="Lin D."/>
            <person name="Mosedale D."/>
            <person name="Nakahara K."/>
            <person name="Namath A."/>
            <person name="Oefner P."/>
            <person name="Oh C."/>
            <person name="Petel F.X."/>
            <person name="Roberts D."/>
            <person name="Schramm S."/>
            <person name="Schroeder M."/>
            <person name="Shogren T."/>
            <person name="Shroff N."/>
            <person name="Winant A."/>
            <person name="Yelton M.A."/>
            <person name="Botstein D."/>
            <person name="Davis R.W."/>
            <person name="Johnston M."/>
            <person name="Andrews S."/>
            <person name="Brinkman R."/>
            <person name="Cooper J."/>
            <person name="Ding H."/>
            <person name="Du Z."/>
            <person name="Favello A."/>
            <person name="Fulton L."/>
            <person name="Gattung S."/>
            <person name="Greco T."/>
            <person name="Hallsworth K."/>
            <person name="Hawkins J."/>
            <person name="Hillier L.W."/>
            <person name="Jier M."/>
            <person name="Johnson D."/>
            <person name="Johnston L."/>
            <person name="Kirsten J."/>
            <person name="Kucaba T."/>
            <person name="Langston Y."/>
            <person name="Latreille P."/>
            <person name="Le T."/>
            <person name="Mardis E."/>
            <person name="Menezes S."/>
            <person name="Miller N."/>
            <person name="Nhan M."/>
            <person name="Pauley A."/>
            <person name="Peluso D."/>
            <person name="Rifkin L."/>
            <person name="Riles L."/>
            <person name="Taich A."/>
            <person name="Trevaskis E."/>
            <person name="Vignati D."/>
            <person name="Wilcox L."/>
            <person name="Wohldman P."/>
            <person name="Vaudin M."/>
            <person name="Wilson R."/>
            <person name="Waterston R."/>
            <person name="Albermann K."/>
            <person name="Hani J."/>
            <person name="Heumann K."/>
            <person name="Kleine K."/>
            <person name="Mewes H.-W."/>
            <person name="Zollner A."/>
            <person name="Zaccaria P."/>
        </authorList>
    </citation>
    <scope>NUCLEOTIDE SEQUENCE [LARGE SCALE GENOMIC DNA]</scope>
    <source>
        <strain>ATCC 204508 / S288c</strain>
    </source>
</reference>
<reference key="2">
    <citation type="journal article" date="2014" name="G3 (Bethesda)">
        <title>The reference genome sequence of Saccharomyces cerevisiae: Then and now.</title>
        <authorList>
            <person name="Engel S.R."/>
            <person name="Dietrich F.S."/>
            <person name="Fisk D.G."/>
            <person name="Binkley G."/>
            <person name="Balakrishnan R."/>
            <person name="Costanzo M.C."/>
            <person name="Dwight S.S."/>
            <person name="Hitz B.C."/>
            <person name="Karra K."/>
            <person name="Nash R.S."/>
            <person name="Weng S."/>
            <person name="Wong E.D."/>
            <person name="Lloyd P."/>
            <person name="Skrzypek M.S."/>
            <person name="Miyasato S.R."/>
            <person name="Simison M."/>
            <person name="Cherry J.M."/>
        </authorList>
    </citation>
    <scope>GENOME REANNOTATION</scope>
    <source>
        <strain>ATCC 204508 / S288c</strain>
    </source>
</reference>
<reference key="3">
    <citation type="journal article" date="1996" name="Yeast">
        <title>The sequence of a 16,691 bp segment of Saccharomyces cerevisiae chromosome IV identifies the DUN1, PMT1, PMT5, SRP14 and DPR1 genes, and five new open reading frames.</title>
        <authorList>
            <person name="Boskovic J."/>
            <person name="Soler-Mira A."/>
            <person name="Garcia-Cantalejo J.M."/>
            <person name="Ballesta J.P.G."/>
            <person name="Jimenez A."/>
            <person name="Remacha M.A."/>
        </authorList>
    </citation>
    <scope>NUCLEOTIDE SEQUENCE [GENOMIC DNA] OF 955-1436</scope>
    <source>
        <strain>ATCC 96604 / S288c / FY1679</strain>
    </source>
</reference>
<reference key="4">
    <citation type="journal article" date="1999" name="RNA">
        <title>The yeast Saccharomyces cerevisiae YDL112w ORF encodes the putative 2'-O-ribose methyltransferase catalyzing the formation of Gm18 in tRNAs.</title>
        <authorList>
            <person name="Cavaille J."/>
            <person name="Chetouani F."/>
            <person name="Bachellerie J.-P."/>
        </authorList>
    </citation>
    <scope>FUNCTION</scope>
    <scope>CATALYTIC ACTIVITY</scope>
</reference>
<reference key="5">
    <citation type="journal article" date="2003" name="Nature">
        <title>Global analysis of protein localization in budding yeast.</title>
        <authorList>
            <person name="Huh W.-K."/>
            <person name="Falvo J.V."/>
            <person name="Gerke L.C."/>
            <person name="Carroll A.S."/>
            <person name="Howson R.W."/>
            <person name="Weissman J.S."/>
            <person name="O'Shea E.K."/>
        </authorList>
    </citation>
    <scope>SUBCELLULAR LOCATION [LARGE SCALE ANALYSIS]</scope>
</reference>
<reference key="6">
    <citation type="journal article" date="2003" name="Nature">
        <title>Global analysis of protein expression in yeast.</title>
        <authorList>
            <person name="Ghaemmaghami S."/>
            <person name="Huh W.-K."/>
            <person name="Bower K."/>
            <person name="Howson R.W."/>
            <person name="Belle A."/>
            <person name="Dephoure N."/>
            <person name="O'Shea E.K."/>
            <person name="Weissman J.S."/>
        </authorList>
    </citation>
    <scope>LEVEL OF PROTEIN EXPRESSION [LARGE SCALE ANALYSIS]</scope>
</reference>
<reference key="7">
    <citation type="journal article" date="2020" name="PLoS ONE">
        <title>2'-O-ribose methylation of transfer RNA promotes recovery from oxidative stress in Saccharomyces cerevisiae.</title>
        <authorList>
            <person name="Endres L."/>
            <person name="Rose R.E."/>
            <person name="Doyle F."/>
            <person name="Rahn T."/>
            <person name="Lee B."/>
            <person name="Seaman J."/>
            <person name="McIntyre W.D."/>
            <person name="Fabris D."/>
        </authorList>
    </citation>
    <scope>DISRUPTION PHENOTYPE</scope>
</reference>
<comment type="function">
    <text evidence="5">S-adenosyl-L-methionine-dependent 2'-O-ribose methyltransferase that catalyzes the formation of 2'-O-methylguanosine at position 18 (Gm18) in various tRNAs.</text>
</comment>
<comment type="catalytic activity">
    <reaction evidence="5">
        <text>guanosine(18) in tRNA + S-adenosyl-L-methionine = 2'-O-methylguanosine(18) in tRNA + S-adenosyl-L-homocysteine + H(+)</text>
        <dbReference type="Rhea" id="RHEA:20077"/>
        <dbReference type="Rhea" id="RHEA-COMP:10190"/>
        <dbReference type="Rhea" id="RHEA-COMP:10192"/>
        <dbReference type="ChEBI" id="CHEBI:15378"/>
        <dbReference type="ChEBI" id="CHEBI:57856"/>
        <dbReference type="ChEBI" id="CHEBI:59789"/>
        <dbReference type="ChEBI" id="CHEBI:74269"/>
        <dbReference type="ChEBI" id="CHEBI:74445"/>
        <dbReference type="EC" id="2.1.1.34"/>
    </reaction>
</comment>
<comment type="subcellular location">
    <subcellularLocation>
        <location evidence="2">Cytoplasm</location>
    </subcellularLocation>
</comment>
<comment type="disruption phenotype">
    <text evidence="4">Increases cellular ROS (reactive oxygen species) levels (PubMed:32053677). Increases RNA level of TRM7, TRM13 and TRM44 (PubMed:32053677). Sensitive to oxidate stress induced by hydrogen peroxide and rotenone (PubMed:32053677). Mildly slows cell population growth (PubMed:32053677).</text>
</comment>
<comment type="miscellaneous">
    <text evidence="3">Present with 861 molecules/cell in log phase SD medium.</text>
</comment>
<comment type="similarity">
    <text evidence="7">Belongs to the class IV-like SAM-binding methyltransferase superfamily. RNA methyltransferase TrmH family.</text>
</comment>
<dbReference type="EC" id="2.1.1.34" evidence="5"/>
<dbReference type="EMBL" id="Z74160">
    <property type="protein sequence ID" value="CAA98680.1"/>
    <property type="molecule type" value="Genomic_DNA"/>
</dbReference>
<dbReference type="EMBL" id="X95644">
    <property type="protein sequence ID" value="CAA64900.1"/>
    <property type="molecule type" value="Genomic_DNA"/>
</dbReference>
<dbReference type="EMBL" id="Z74159">
    <property type="protein sequence ID" value="CAA98679.1"/>
    <property type="molecule type" value="Genomic_DNA"/>
</dbReference>
<dbReference type="EMBL" id="BK006938">
    <property type="protein sequence ID" value="DAA11748.1"/>
    <property type="molecule type" value="Genomic_DNA"/>
</dbReference>
<dbReference type="PIR" id="S67655">
    <property type="entry name" value="S67655"/>
</dbReference>
<dbReference type="RefSeq" id="NP_010171.1">
    <property type="nucleotide sequence ID" value="NM_001180171.1"/>
</dbReference>
<dbReference type="SMR" id="Q07527"/>
<dbReference type="BioGRID" id="31950">
    <property type="interactions" value="105"/>
</dbReference>
<dbReference type="DIP" id="DIP-2598N"/>
<dbReference type="FunCoup" id="Q07527">
    <property type="interactions" value="203"/>
</dbReference>
<dbReference type="IntAct" id="Q07527">
    <property type="interactions" value="9"/>
</dbReference>
<dbReference type="STRING" id="4932.YDL112W"/>
<dbReference type="iPTMnet" id="Q07527"/>
<dbReference type="PaxDb" id="4932-YDL112W"/>
<dbReference type="PeptideAtlas" id="Q07527"/>
<dbReference type="EnsemblFungi" id="YDL112W_mRNA">
    <property type="protein sequence ID" value="YDL112W"/>
    <property type="gene ID" value="YDL112W"/>
</dbReference>
<dbReference type="GeneID" id="851446"/>
<dbReference type="KEGG" id="sce:YDL112W"/>
<dbReference type="AGR" id="SGD:S000002270"/>
<dbReference type="SGD" id="S000002270">
    <property type="gene designation" value="TRM3"/>
</dbReference>
<dbReference type="VEuPathDB" id="FungiDB:YDL112W"/>
<dbReference type="eggNOG" id="KOG0839">
    <property type="taxonomic scope" value="Eukaryota"/>
</dbReference>
<dbReference type="GeneTree" id="ENSGT00390000003939"/>
<dbReference type="HOGENOM" id="CLU_005519_0_0_1"/>
<dbReference type="InParanoid" id="Q07527"/>
<dbReference type="OMA" id="VTADRWM"/>
<dbReference type="OrthoDB" id="241340at2759"/>
<dbReference type="BioCyc" id="YEAST:YDL112W-MONOMER"/>
<dbReference type="BioGRID-ORCS" id="851446">
    <property type="hits" value="0 hits in 10 CRISPR screens"/>
</dbReference>
<dbReference type="PRO" id="PR:Q07527"/>
<dbReference type="Proteomes" id="UP000002311">
    <property type="component" value="Chromosome IV"/>
</dbReference>
<dbReference type="RNAct" id="Q07527">
    <property type="molecule type" value="protein"/>
</dbReference>
<dbReference type="GO" id="GO:0005737">
    <property type="term" value="C:cytoplasm"/>
    <property type="evidence" value="ECO:0007005"/>
    <property type="project" value="SGD"/>
</dbReference>
<dbReference type="GO" id="GO:0003723">
    <property type="term" value="F:RNA binding"/>
    <property type="evidence" value="ECO:0007669"/>
    <property type="project" value="InterPro"/>
</dbReference>
<dbReference type="GO" id="GO:0141100">
    <property type="term" value="F:tRNA (guanine(18)-2'-O)-methyltransferase activity"/>
    <property type="evidence" value="ECO:0007669"/>
    <property type="project" value="UniProtKB-EC"/>
</dbReference>
<dbReference type="GO" id="GO:0016423">
    <property type="term" value="F:tRNA (guanine) methyltransferase activity"/>
    <property type="evidence" value="ECO:0000314"/>
    <property type="project" value="SGD"/>
</dbReference>
<dbReference type="GO" id="GO:0034599">
    <property type="term" value="P:cellular response to oxidative stress"/>
    <property type="evidence" value="ECO:0000315"/>
    <property type="project" value="SGD"/>
</dbReference>
<dbReference type="GO" id="GO:0030488">
    <property type="term" value="P:tRNA methylation"/>
    <property type="evidence" value="ECO:0000314"/>
    <property type="project" value="SGD"/>
</dbReference>
<dbReference type="GO" id="GO:0002128">
    <property type="term" value="P:tRNA nucleoside ribose methylation"/>
    <property type="evidence" value="ECO:0000315"/>
    <property type="project" value="SGD"/>
</dbReference>
<dbReference type="CDD" id="cd18091">
    <property type="entry name" value="SpoU-like_TRM3-like"/>
    <property type="match status" value="1"/>
</dbReference>
<dbReference type="FunFam" id="3.40.1280.10:FF:000022">
    <property type="entry name" value="Trm3p"/>
    <property type="match status" value="1"/>
</dbReference>
<dbReference type="Gene3D" id="3.40.1280.10">
    <property type="match status" value="1"/>
</dbReference>
<dbReference type="InterPro" id="IPR029028">
    <property type="entry name" value="Alpha/beta_knot_MTases"/>
</dbReference>
<dbReference type="InterPro" id="IPR001537">
    <property type="entry name" value="SpoU_MeTrfase"/>
</dbReference>
<dbReference type="InterPro" id="IPR025759">
    <property type="entry name" value="Trm3"/>
</dbReference>
<dbReference type="InterPro" id="IPR045330">
    <property type="entry name" value="Trm3/TARBP1"/>
</dbReference>
<dbReference type="InterPro" id="IPR044748">
    <property type="entry name" value="Trm3/TARBP1_C"/>
</dbReference>
<dbReference type="InterPro" id="IPR029026">
    <property type="entry name" value="tRNA_m1G_MTases_N"/>
</dbReference>
<dbReference type="PANTHER" id="PTHR12029:SF11">
    <property type="entry name" value="METHYLTRANSFERASE TARBP1-RELATED"/>
    <property type="match status" value="1"/>
</dbReference>
<dbReference type="PANTHER" id="PTHR12029">
    <property type="entry name" value="RNA METHYLTRANSFERASE"/>
    <property type="match status" value="1"/>
</dbReference>
<dbReference type="Pfam" id="PF00588">
    <property type="entry name" value="SpoU_methylase"/>
    <property type="match status" value="1"/>
</dbReference>
<dbReference type="SUPFAM" id="SSF75217">
    <property type="entry name" value="alpha/beta knot"/>
    <property type="match status" value="1"/>
</dbReference>
<dbReference type="PROSITE" id="PS51623">
    <property type="entry name" value="SAM_MT_TRMH_1"/>
    <property type="match status" value="1"/>
</dbReference>
<organism>
    <name type="scientific">Saccharomyces cerevisiae (strain ATCC 204508 / S288c)</name>
    <name type="common">Baker's yeast</name>
    <dbReference type="NCBI Taxonomy" id="559292"/>
    <lineage>
        <taxon>Eukaryota</taxon>
        <taxon>Fungi</taxon>
        <taxon>Dikarya</taxon>
        <taxon>Ascomycota</taxon>
        <taxon>Saccharomycotina</taxon>
        <taxon>Saccharomycetes</taxon>
        <taxon>Saccharomycetales</taxon>
        <taxon>Saccharomycetaceae</taxon>
        <taxon>Saccharomyces</taxon>
    </lineage>
</organism>
<accession>Q07527</accession>
<accession>D6VRN8</accession>
<accession>P89896</accession>
<accession>Q05336</accession>
<accession>Q7LGS3</accession>
<sequence>MVGGALICKYLPREEQLKLISDLIQNDSLEEVLELIETSPLDITTDSNIETPIFEKITEQVIAYASIDGEAREMFRSSRAEMNKALRTSAQLLCCLPSVWHKFQVWMSYRLNDIISENYKHLFNDNFGKKIVQPFFDSFAEEQNANIKHENLHLDILSLLHYLEVVYLFDECKNGISSKCLDFIIVPLLGCNSEEIADSCSKLMRWHIKYLSKCCNTDSNFDKLIWTFIKQLYAEGSQQAWKQKNSLSFLLRFLLAAELSPELITYIKTDAYWRHIQTELDNDVHEHRKLALSILKLTIQKLSSHGITLQTTFYKCNDLANIEMLGSWKKFTTLYEMIALDTSLNQIQAAKQDIIKIFDNEHLHHSWGLILLSTGLKSSMESVRKYMMTLMFSITNMSAFSSNLPLLTKTLLPAAMSAHYFDVKGVSCPHGEKLSLFVNNLLSQTTEGISDILFEILKLLVEKGTSFDPSRIYLSYGILVFFQNNKQKTINSDHLSLIRKLYDFAAEEEVLETTIQTIYLKFLLYIDPSVSASELLFTLVSHIKLKGGTYKYVEPLFEDYRDLAVSHFDDLQAKENLTTNIGKDTIFDLLASIIFDFKDIDITPDFLIEVAKSKQDIPVYTSKAVTFLTQLLSGEPSNGYTYENATALLSYPNFTISTWKSINVNNLFKSVMEKFSLDKFKFFAEIYQKTYECRFDTIELNFNDLLSLYEMVKKSANQCSRESFKVKDSAYSSYFELLNTFLKTYALNRDSSEGNDDELHILLRLVDENINKDNGNYLGNLAVCKLLYFIIDSYIHCSTSVSDDDIFIVKFIFEKFSFIWECINSERLVLKERDLHLMLIKGLFHPVILYFGSNQYIDTLTSKLEEHAQTIISLSYSRRSLLPLLGSQLRVFMKFYGKLLREDVNYWWLINIIVGVFKQPQMDVNLYKLKPVISSLFDHKLNNYYIKGDELYEKVYGPDEILARVSIIDSILYANDQLKIRLIEKVTEKTNALYAIKRTDGAEALQRLLQWQLLLLSLLTTNEKKLSETSMIRILKSIEDESSPLVRVYKEWFISSKVVDYYKTGNPKFAEDYLFSLLEDHSKPVFVVSAEKICFMVLKDLRNDEKKYGFTQLLDRFICTLVPNAASNKPLVRHFSNSLIISLWPTFKAYLSDHTLRNIIENLYSNAKKTQIFGQYRAGDANIWDLKGDRKLTNMFGGVLKKVTDHDCPYISESVFEKYLQEKDIVPIGTDERSLWLDKRDTNTESVNNANISCDTSPLQTKSGAWETVLDLDNKKSNDVVTRSELIVVSSLVDKPPNLGGICRLCDVLGVGLLTVQDIKVKNHPQFKNVAVTADRWMPMEEVALDEIASFMKEKKKEGYTLIGLEQTDKSVKLDNNFQFPKKSLILLGTEAFGIPGTLLSELDLCLEIQQFGVIRSMNIQTATAVIVHSYTVQHM</sequence>
<keyword id="KW-0963">Cytoplasm</keyword>
<keyword id="KW-0489">Methyltransferase</keyword>
<keyword id="KW-1185">Reference proteome</keyword>
<keyword id="KW-0949">S-adenosyl-L-methionine</keyword>
<keyword id="KW-0808">Transferase</keyword>
<keyword id="KW-0819">tRNA processing</keyword>
<proteinExistence type="evidence at protein level"/>
<gene>
    <name evidence="6" type="primary">TRM3</name>
    <name evidence="9" type="ordered locus">YDL112W</name>
</gene>
<evidence type="ECO:0000250" key="1">
    <source>
        <dbReference type="UniProtKB" id="Q13395"/>
    </source>
</evidence>
<evidence type="ECO:0000269" key="2">
    <source>
    </source>
</evidence>
<evidence type="ECO:0000269" key="3">
    <source>
    </source>
</evidence>
<evidence type="ECO:0000269" key="4">
    <source>
    </source>
</evidence>
<evidence type="ECO:0000269" key="5">
    <source>
    </source>
</evidence>
<evidence type="ECO:0000303" key="6">
    <source>
    </source>
</evidence>
<evidence type="ECO:0000305" key="7"/>
<evidence type="ECO:0000305" key="8">
    <source>
    </source>
</evidence>
<evidence type="ECO:0000312" key="9">
    <source>
        <dbReference type="SGD" id="S000002270"/>
    </source>
</evidence>
<protein>
    <recommendedName>
        <fullName evidence="8">tRNA (guanosine(18)-2'-O)-methyltransferase</fullName>
        <ecNumber evidence="5">2.1.1.34</ecNumber>
    </recommendedName>
    <alternativeName>
        <fullName evidence="6">tRNA [Gm18] ribose methylase</fullName>
    </alternativeName>
    <alternativeName>
        <fullName evidence="6">tRNA methyltransferase 3</fullName>
    </alternativeName>
</protein>
<name>TRM3_YEAST</name>